<name>CMOA_ECOK1</name>
<comment type="function">
    <text evidence="1">Catalyzes the conversion of S-adenosyl-L-methionine (SAM) to carboxy-S-adenosyl-L-methionine (Cx-SAM).</text>
</comment>
<comment type="catalytic activity">
    <reaction evidence="1">
        <text>prephenate + S-adenosyl-L-methionine = carboxy-S-adenosyl-L-methionine + 3-phenylpyruvate + H2O</text>
        <dbReference type="Rhea" id="RHEA:51692"/>
        <dbReference type="ChEBI" id="CHEBI:15377"/>
        <dbReference type="ChEBI" id="CHEBI:18005"/>
        <dbReference type="ChEBI" id="CHEBI:29934"/>
        <dbReference type="ChEBI" id="CHEBI:59789"/>
        <dbReference type="ChEBI" id="CHEBI:134278"/>
    </reaction>
</comment>
<comment type="subunit">
    <text evidence="1">Homodimer.</text>
</comment>
<comment type="similarity">
    <text evidence="1">Belongs to the class I-like SAM-binding methyltransferase superfamily. Cx-SAM synthase family.</text>
</comment>
<evidence type="ECO:0000255" key="1">
    <source>
        <dbReference type="HAMAP-Rule" id="MF_01589"/>
    </source>
</evidence>
<protein>
    <recommendedName>
        <fullName evidence="1">Carboxy-S-adenosyl-L-methionine synthase</fullName>
        <shortName evidence="1">Cx-SAM synthase</shortName>
        <ecNumber evidence="1">2.1.3.-</ecNumber>
    </recommendedName>
</protein>
<gene>
    <name evidence="1" type="primary">cmoA</name>
    <name type="ordered locus">Ecok1_17270</name>
    <name type="ORF">APECO1_920</name>
</gene>
<dbReference type="EC" id="2.1.3.-" evidence="1"/>
<dbReference type="EMBL" id="CP000468">
    <property type="protein sequence ID" value="ABJ01221.1"/>
    <property type="molecule type" value="Genomic_DNA"/>
</dbReference>
<dbReference type="RefSeq" id="WP_000019588.1">
    <property type="nucleotide sequence ID" value="NZ_CADILS010000028.1"/>
</dbReference>
<dbReference type="SMR" id="A1AC31"/>
<dbReference type="GeneID" id="75202724"/>
<dbReference type="KEGG" id="ecv:APECO1_920"/>
<dbReference type="HOGENOM" id="CLU_078475_0_0_6"/>
<dbReference type="Proteomes" id="UP000008216">
    <property type="component" value="Chromosome"/>
</dbReference>
<dbReference type="GO" id="GO:0016743">
    <property type="term" value="F:carboxyl- or carbamoyltransferase activity"/>
    <property type="evidence" value="ECO:0007669"/>
    <property type="project" value="UniProtKB-UniRule"/>
</dbReference>
<dbReference type="GO" id="GO:1904047">
    <property type="term" value="F:S-adenosyl-L-methionine binding"/>
    <property type="evidence" value="ECO:0007669"/>
    <property type="project" value="UniProtKB-UniRule"/>
</dbReference>
<dbReference type="GO" id="GO:0002098">
    <property type="term" value="P:tRNA wobble uridine modification"/>
    <property type="evidence" value="ECO:0007669"/>
    <property type="project" value="InterPro"/>
</dbReference>
<dbReference type="CDD" id="cd02440">
    <property type="entry name" value="AdoMet_MTases"/>
    <property type="match status" value="1"/>
</dbReference>
<dbReference type="FunFam" id="3.40.50.150:FF:000030">
    <property type="entry name" value="Carboxy-S-adenosyl-L-methionine synthase"/>
    <property type="match status" value="1"/>
</dbReference>
<dbReference type="Gene3D" id="3.40.50.150">
    <property type="entry name" value="Vaccinia Virus protein VP39"/>
    <property type="match status" value="1"/>
</dbReference>
<dbReference type="HAMAP" id="MF_01589">
    <property type="entry name" value="Cx_SAM_synthase"/>
    <property type="match status" value="1"/>
</dbReference>
<dbReference type="InterPro" id="IPR005271">
    <property type="entry name" value="CmoA"/>
</dbReference>
<dbReference type="InterPro" id="IPR041698">
    <property type="entry name" value="Methyltransf_25"/>
</dbReference>
<dbReference type="InterPro" id="IPR029063">
    <property type="entry name" value="SAM-dependent_MTases_sf"/>
</dbReference>
<dbReference type="NCBIfam" id="TIGR00740">
    <property type="entry name" value="carboxy-S-adenosyl-L-methionine synthase CmoA"/>
    <property type="match status" value="1"/>
</dbReference>
<dbReference type="NCBIfam" id="NF011995">
    <property type="entry name" value="PRK15451.1"/>
    <property type="match status" value="1"/>
</dbReference>
<dbReference type="PANTHER" id="PTHR43861:SF2">
    <property type="entry name" value="CARBOXY-S-ADENOSYL-L-METHIONINE SYNTHASE"/>
    <property type="match status" value="1"/>
</dbReference>
<dbReference type="PANTHER" id="PTHR43861">
    <property type="entry name" value="TRANS-ACONITATE 2-METHYLTRANSFERASE-RELATED"/>
    <property type="match status" value="1"/>
</dbReference>
<dbReference type="Pfam" id="PF13649">
    <property type="entry name" value="Methyltransf_25"/>
    <property type="match status" value="1"/>
</dbReference>
<dbReference type="PIRSF" id="PIRSF006325">
    <property type="entry name" value="MeTrfase_bac"/>
    <property type="match status" value="1"/>
</dbReference>
<dbReference type="SUPFAM" id="SSF53335">
    <property type="entry name" value="S-adenosyl-L-methionine-dependent methyltransferases"/>
    <property type="match status" value="1"/>
</dbReference>
<reference key="1">
    <citation type="journal article" date="2007" name="J. Bacteriol.">
        <title>The genome sequence of avian pathogenic Escherichia coli strain O1:K1:H7 shares strong similarities with human extraintestinal pathogenic E. coli genomes.</title>
        <authorList>
            <person name="Johnson T.J."/>
            <person name="Kariyawasam S."/>
            <person name="Wannemuehler Y."/>
            <person name="Mangiamele P."/>
            <person name="Johnson S.J."/>
            <person name="Doetkott C."/>
            <person name="Skyberg J.A."/>
            <person name="Lynne A.M."/>
            <person name="Johnson J.R."/>
            <person name="Nolan L.K."/>
        </authorList>
    </citation>
    <scope>NUCLEOTIDE SEQUENCE [LARGE SCALE GENOMIC DNA]</scope>
</reference>
<accession>A1AC31</accession>
<keyword id="KW-1185">Reference proteome</keyword>
<keyword id="KW-0949">S-adenosyl-L-methionine</keyword>
<keyword id="KW-0808">Transferase</keyword>
<organism>
    <name type="scientific">Escherichia coli O1:K1 / APEC</name>
    <dbReference type="NCBI Taxonomy" id="405955"/>
    <lineage>
        <taxon>Bacteria</taxon>
        <taxon>Pseudomonadati</taxon>
        <taxon>Pseudomonadota</taxon>
        <taxon>Gammaproteobacteria</taxon>
        <taxon>Enterobacterales</taxon>
        <taxon>Enterobacteriaceae</taxon>
        <taxon>Escherichia</taxon>
    </lineage>
</organism>
<sequence length="247" mass="27791">MSHRDTLFSAPIARLGDWTFDERVAEVFPDMIQRSVPGYSNIISMIGMLAERFVQPGTQVYDLGCSLGAATLSVRRNIHHDNCKIIAIDNSPAMIERCRRHIDAYKAPTPVDVIEGDIRDIAIENASMVVLNFTLQFLEPSERQALLDKIYQGLNPGGALVLSEKFSFEDAKVGELLFNMHHDFKRANGYSELEISQKRSMLENVMLTDSVETHKARLHKAGFEHSELWFQCFNFGSLVALKAEDAA</sequence>
<feature type="chain" id="PRO_0000314328" description="Carboxy-S-adenosyl-L-methionine synthase">
    <location>
        <begin position="1"/>
        <end position="247"/>
    </location>
</feature>
<feature type="binding site" evidence="1">
    <location>
        <position position="39"/>
    </location>
    <ligand>
        <name>S-adenosyl-L-methionine</name>
        <dbReference type="ChEBI" id="CHEBI:59789"/>
    </ligand>
</feature>
<feature type="binding site" evidence="1">
    <location>
        <begin position="64"/>
        <end position="66"/>
    </location>
    <ligand>
        <name>S-adenosyl-L-methionine</name>
        <dbReference type="ChEBI" id="CHEBI:59789"/>
    </ligand>
</feature>
<feature type="binding site" evidence="1">
    <location>
        <begin position="89"/>
        <end position="90"/>
    </location>
    <ligand>
        <name>S-adenosyl-L-methionine</name>
        <dbReference type="ChEBI" id="CHEBI:59789"/>
    </ligand>
</feature>
<feature type="binding site" evidence="1">
    <location>
        <begin position="117"/>
        <end position="118"/>
    </location>
    <ligand>
        <name>S-adenosyl-L-methionine</name>
        <dbReference type="ChEBI" id="CHEBI:59789"/>
    </ligand>
</feature>
<feature type="binding site" evidence="1">
    <location>
        <position position="132"/>
    </location>
    <ligand>
        <name>S-adenosyl-L-methionine</name>
        <dbReference type="ChEBI" id="CHEBI:59789"/>
    </ligand>
</feature>
<feature type="binding site" evidence="1">
    <location>
        <position position="199"/>
    </location>
    <ligand>
        <name>S-adenosyl-L-methionine</name>
        <dbReference type="ChEBI" id="CHEBI:59789"/>
    </ligand>
</feature>
<proteinExistence type="inferred from homology"/>